<feature type="chain" id="PRO_0000385187" description="Aquaporin">
    <location>
        <begin position="1"/>
        <end position="242"/>
    </location>
</feature>
<feature type="topological domain" description="Cytoplasmic" evidence="2">
    <location>
        <begin position="1"/>
        <end position="11"/>
    </location>
</feature>
<feature type="transmembrane region" description="Helical" evidence="2">
    <location>
        <begin position="12"/>
        <end position="32"/>
    </location>
</feature>
<feature type="topological domain" description="Extracellular" evidence="2">
    <location>
        <begin position="33"/>
        <end position="39"/>
    </location>
</feature>
<feature type="transmembrane region" description="Helical" evidence="2">
    <location>
        <begin position="40"/>
        <end position="60"/>
    </location>
</feature>
<feature type="topological domain" description="Cytoplasmic" evidence="2">
    <location>
        <begin position="61"/>
        <end position="83"/>
    </location>
</feature>
<feature type="transmembrane region" description="Helical" evidence="2">
    <location>
        <begin position="84"/>
        <end position="104"/>
    </location>
</feature>
<feature type="topological domain" description="Extracellular" evidence="2">
    <location>
        <begin position="105"/>
        <end position="133"/>
    </location>
</feature>
<feature type="transmembrane region" description="Helical" evidence="2">
    <location>
        <begin position="134"/>
        <end position="154"/>
    </location>
</feature>
<feature type="topological domain" description="Cytoplasmic" evidence="2">
    <location>
        <begin position="155"/>
        <end position="175"/>
    </location>
</feature>
<feature type="transmembrane region" description="Helical" evidence="2">
    <location>
        <begin position="176"/>
        <end position="196"/>
    </location>
</feature>
<feature type="topological domain" description="Extracellular" evidence="2">
    <location>
        <begin position="197"/>
        <end position="217"/>
    </location>
</feature>
<feature type="transmembrane region" description="Helical" evidence="2">
    <location>
        <begin position="218"/>
        <end position="238"/>
    </location>
</feature>
<feature type="topological domain" description="Cytoplasmic" evidence="2">
    <location>
        <begin position="239"/>
        <end position="242"/>
    </location>
</feature>
<feature type="short sequence motif" description="NPA">
    <location>
        <begin position="69"/>
        <end position="71"/>
    </location>
</feature>
<feature type="short sequence motif" description="NPG">
    <location>
        <begin position="201"/>
        <end position="203"/>
    </location>
</feature>
<dbReference type="EMBL" id="ABGB01000018">
    <property type="protein sequence ID" value="EED44283.1"/>
    <property type="molecule type" value="Genomic_DNA"/>
</dbReference>
<dbReference type="RefSeq" id="XP_002649753.1">
    <property type="nucleotide sequence ID" value="XM_002649707.1"/>
</dbReference>
<dbReference type="SMR" id="B7XIC4"/>
<dbReference type="STRING" id="481877.B7XIC4"/>
<dbReference type="TCDB" id="1.A.8.10.13">
    <property type="family name" value="the major intrinsic protein (mip) family"/>
</dbReference>
<dbReference type="VEuPathDB" id="MicrosporidiaDB:EBI_27080"/>
<dbReference type="HOGENOM" id="CLU_020019_3_4_1"/>
<dbReference type="InParanoid" id="B7XIC4"/>
<dbReference type="OMA" id="RAFLYWI"/>
<dbReference type="OrthoDB" id="3222at2759"/>
<dbReference type="GO" id="GO:0005886">
    <property type="term" value="C:plasma membrane"/>
    <property type="evidence" value="ECO:0007669"/>
    <property type="project" value="UniProtKB-SubCell"/>
</dbReference>
<dbReference type="GO" id="GO:0015250">
    <property type="term" value="F:water channel activity"/>
    <property type="evidence" value="ECO:0007669"/>
    <property type="project" value="TreeGrafter"/>
</dbReference>
<dbReference type="Gene3D" id="1.20.1080.10">
    <property type="entry name" value="Glycerol uptake facilitator protein"/>
    <property type="match status" value="1"/>
</dbReference>
<dbReference type="InterPro" id="IPR023271">
    <property type="entry name" value="Aquaporin-like"/>
</dbReference>
<dbReference type="InterPro" id="IPR034294">
    <property type="entry name" value="Aquaporin_transptr"/>
</dbReference>
<dbReference type="InterPro" id="IPR000425">
    <property type="entry name" value="MIP"/>
</dbReference>
<dbReference type="InterPro" id="IPR022357">
    <property type="entry name" value="MIP_CS"/>
</dbReference>
<dbReference type="PANTHER" id="PTHR19139">
    <property type="entry name" value="AQUAPORIN TRANSPORTER"/>
    <property type="match status" value="1"/>
</dbReference>
<dbReference type="PANTHER" id="PTHR19139:SF199">
    <property type="entry name" value="MIP17260P"/>
    <property type="match status" value="1"/>
</dbReference>
<dbReference type="Pfam" id="PF00230">
    <property type="entry name" value="MIP"/>
    <property type="match status" value="1"/>
</dbReference>
<dbReference type="PRINTS" id="PR00783">
    <property type="entry name" value="MINTRINSICP"/>
</dbReference>
<dbReference type="SUPFAM" id="SSF81338">
    <property type="entry name" value="Aquaporin-like"/>
    <property type="match status" value="1"/>
</dbReference>
<dbReference type="PROSITE" id="PS00221">
    <property type="entry name" value="MIP"/>
    <property type="match status" value="1"/>
</dbReference>
<comment type="function">
    <text evidence="1">Water channel required to facilitate the transport of water across membranes. Involved in osmotolerance (By similarity).</text>
</comment>
<comment type="subcellular location">
    <subcellularLocation>
        <location evidence="1">Cell membrane</location>
        <topology evidence="1">Multi-pass membrane protein</topology>
    </subcellularLocation>
</comment>
<comment type="domain">
    <text>Aquaporins contain two tandem repeats each containing three membrane-spanning domains and a pore-forming loop with the signature motif Asn-Pro-Ala (NPA).</text>
</comment>
<comment type="similarity">
    <text evidence="3">Belongs to the MIP/aquaporin (TC 1.A.8) family.</text>
</comment>
<evidence type="ECO:0000250" key="1"/>
<evidence type="ECO:0000255" key="2"/>
<evidence type="ECO:0000305" key="3"/>
<protein>
    <recommendedName>
        <fullName>Aquaporin</fullName>
    </recommendedName>
</protein>
<organism>
    <name type="scientific">Enterocytozoon bieneusi (strain H348)</name>
    <name type="common">Microsporidian parasite</name>
    <dbReference type="NCBI Taxonomy" id="481877"/>
    <lineage>
        <taxon>Eukaryota</taxon>
        <taxon>Fungi</taxon>
        <taxon>Fungi incertae sedis</taxon>
        <taxon>Microsporidia</taxon>
        <taxon>Enterocytozoonidae</taxon>
        <taxon>Enterocytozoon</taxon>
    </lineage>
</organism>
<sequence>MNTSTKLICQKLFAEMLCSCIFGFAVYSAILNTKASNSSISSTTVGLTVCFSSISLIYTFCDHSVAHFNPAITIAAICTGKLDILLGIGYVIAQLIGFILATLLTVVCFPYGYLKTMEFIASARISDDISTVNLFFTEFILSFILVFIAFEVGINAIREPGVTLFVGIKQIDRSKFAPLTIGITLGFLAFLASTTSGGAFNPGIVWGPAIMGGNFDDFVIYIISELSGGLLGAFIQVFLLFK</sequence>
<accession>B7XIC4</accession>
<keyword id="KW-1003">Cell membrane</keyword>
<keyword id="KW-0472">Membrane</keyword>
<keyword id="KW-0677">Repeat</keyword>
<keyword id="KW-0812">Transmembrane</keyword>
<keyword id="KW-1133">Transmembrane helix</keyword>
<keyword id="KW-0813">Transport</keyword>
<gene>
    <name type="primary">AQP</name>
    <name type="ORF">EBI_27080</name>
</gene>
<proteinExistence type="inferred from homology"/>
<name>AQP_ENTBH</name>
<reference key="1">
    <citation type="journal article" date="2007" name="PLoS ONE">
        <title>Patterns of genome evolution among the microsporidian parasites Encephalitozoon cuniculi, Antonospora locustae and Enterocytozoon bieneusi.</title>
        <authorList>
            <person name="Corradi N."/>
            <person name="Akiyoshi D.E."/>
            <person name="Morrison H.G."/>
            <person name="Feng X."/>
            <person name="Weiss L.M."/>
            <person name="Tzipori S."/>
            <person name="Keeling P.J."/>
        </authorList>
    </citation>
    <scope>NUCLEOTIDE SEQUENCE [LARGE SCALE GENOMIC DNA]</scope>
    <source>
        <strain>H348</strain>
    </source>
</reference>
<reference key="2">
    <citation type="journal article" date="2009" name="PLoS Pathog.">
        <title>Genomic survey of the non-cultivatable opportunistic human pathogen, Enterocytozoon bieneusi.</title>
        <authorList>
            <person name="Akiyoshi D.E."/>
            <person name="Morrison H.G."/>
            <person name="Lei S."/>
            <person name="Feng X."/>
            <person name="Zhang Q."/>
            <person name="Corradi N."/>
            <person name="Mayanja H."/>
            <person name="Tumwine J.K."/>
            <person name="Keeling P.J."/>
            <person name="Weiss L.M."/>
            <person name="Tzipori S."/>
        </authorList>
    </citation>
    <scope>NUCLEOTIDE SEQUENCE [LARGE SCALE GENOMIC DNA]</scope>
    <source>
        <strain>H348</strain>
    </source>
</reference>